<keyword id="KW-0067">ATP-binding</keyword>
<keyword id="KW-0436">Ligase</keyword>
<keyword id="KW-0479">Metal-binding</keyword>
<keyword id="KW-0547">Nucleotide-binding</keyword>
<keyword id="KW-0671">Queuosine biosynthesis</keyword>
<keyword id="KW-0862">Zinc</keyword>
<dbReference type="EC" id="6.3.4.20" evidence="1"/>
<dbReference type="EMBL" id="CP000720">
    <property type="protein sequence ID" value="ABS47882.1"/>
    <property type="molecule type" value="Genomic_DNA"/>
</dbReference>
<dbReference type="RefSeq" id="WP_002208635.1">
    <property type="nucleotide sequence ID" value="NC_009708.1"/>
</dbReference>
<dbReference type="SMR" id="A7FLB7"/>
<dbReference type="GeneID" id="57975561"/>
<dbReference type="KEGG" id="ypi:YpsIP31758_3085"/>
<dbReference type="HOGENOM" id="CLU_081854_0_0_6"/>
<dbReference type="UniPathway" id="UPA00391"/>
<dbReference type="Proteomes" id="UP000002412">
    <property type="component" value="Chromosome"/>
</dbReference>
<dbReference type="GO" id="GO:0005524">
    <property type="term" value="F:ATP binding"/>
    <property type="evidence" value="ECO:0007669"/>
    <property type="project" value="UniProtKB-UniRule"/>
</dbReference>
<dbReference type="GO" id="GO:0016879">
    <property type="term" value="F:ligase activity, forming carbon-nitrogen bonds"/>
    <property type="evidence" value="ECO:0007669"/>
    <property type="project" value="UniProtKB-UniRule"/>
</dbReference>
<dbReference type="GO" id="GO:0008270">
    <property type="term" value="F:zinc ion binding"/>
    <property type="evidence" value="ECO:0007669"/>
    <property type="project" value="UniProtKB-UniRule"/>
</dbReference>
<dbReference type="GO" id="GO:0008616">
    <property type="term" value="P:queuosine biosynthetic process"/>
    <property type="evidence" value="ECO:0007669"/>
    <property type="project" value="UniProtKB-UniRule"/>
</dbReference>
<dbReference type="CDD" id="cd01995">
    <property type="entry name" value="QueC-like"/>
    <property type="match status" value="1"/>
</dbReference>
<dbReference type="FunFam" id="3.40.50.620:FF:000017">
    <property type="entry name" value="7-cyano-7-deazaguanine synthase"/>
    <property type="match status" value="1"/>
</dbReference>
<dbReference type="Gene3D" id="3.40.50.620">
    <property type="entry name" value="HUPs"/>
    <property type="match status" value="1"/>
</dbReference>
<dbReference type="HAMAP" id="MF_01633">
    <property type="entry name" value="QueC"/>
    <property type="match status" value="1"/>
</dbReference>
<dbReference type="InterPro" id="IPR018317">
    <property type="entry name" value="QueC"/>
</dbReference>
<dbReference type="InterPro" id="IPR014729">
    <property type="entry name" value="Rossmann-like_a/b/a_fold"/>
</dbReference>
<dbReference type="NCBIfam" id="TIGR00364">
    <property type="entry name" value="7-cyano-7-deazaguanine synthase QueC"/>
    <property type="match status" value="1"/>
</dbReference>
<dbReference type="NCBIfam" id="NF008317">
    <property type="entry name" value="PRK11106.1"/>
    <property type="match status" value="1"/>
</dbReference>
<dbReference type="PANTHER" id="PTHR42914">
    <property type="entry name" value="7-CYANO-7-DEAZAGUANINE SYNTHASE"/>
    <property type="match status" value="1"/>
</dbReference>
<dbReference type="PANTHER" id="PTHR42914:SF1">
    <property type="entry name" value="7-CYANO-7-DEAZAGUANINE SYNTHASE"/>
    <property type="match status" value="1"/>
</dbReference>
<dbReference type="Pfam" id="PF06508">
    <property type="entry name" value="QueC"/>
    <property type="match status" value="1"/>
</dbReference>
<dbReference type="PIRSF" id="PIRSF006293">
    <property type="entry name" value="ExsB"/>
    <property type="match status" value="1"/>
</dbReference>
<dbReference type="SUPFAM" id="SSF52402">
    <property type="entry name" value="Adenine nucleotide alpha hydrolases-like"/>
    <property type="match status" value="1"/>
</dbReference>
<protein>
    <recommendedName>
        <fullName evidence="1">7-cyano-7-deazaguanine synthase</fullName>
        <ecNumber evidence="1">6.3.4.20</ecNumber>
    </recommendedName>
    <alternativeName>
        <fullName evidence="1">7-cyano-7-carbaguanine synthase</fullName>
    </alternativeName>
    <alternativeName>
        <fullName evidence="1">PreQ(0) synthase</fullName>
    </alternativeName>
    <alternativeName>
        <fullName evidence="1">Queuosine biosynthesis protein QueC</fullName>
    </alternativeName>
</protein>
<feature type="chain" id="PRO_1000069806" description="7-cyano-7-deazaguanine synthase">
    <location>
        <begin position="1"/>
        <end position="232"/>
    </location>
</feature>
<feature type="binding site" evidence="1">
    <location>
        <begin position="8"/>
        <end position="18"/>
    </location>
    <ligand>
        <name>ATP</name>
        <dbReference type="ChEBI" id="CHEBI:30616"/>
    </ligand>
</feature>
<feature type="binding site" evidence="1">
    <location>
        <position position="189"/>
    </location>
    <ligand>
        <name>Zn(2+)</name>
        <dbReference type="ChEBI" id="CHEBI:29105"/>
    </ligand>
</feature>
<feature type="binding site" evidence="1">
    <location>
        <position position="198"/>
    </location>
    <ligand>
        <name>Zn(2+)</name>
        <dbReference type="ChEBI" id="CHEBI:29105"/>
    </ligand>
</feature>
<feature type="binding site" evidence="1">
    <location>
        <position position="201"/>
    </location>
    <ligand>
        <name>Zn(2+)</name>
        <dbReference type="ChEBI" id="CHEBI:29105"/>
    </ligand>
</feature>
<feature type="binding site" evidence="1">
    <location>
        <position position="204"/>
    </location>
    <ligand>
        <name>Zn(2+)</name>
        <dbReference type="ChEBI" id="CHEBI:29105"/>
    </ligand>
</feature>
<organism>
    <name type="scientific">Yersinia pseudotuberculosis serotype O:1b (strain IP 31758)</name>
    <dbReference type="NCBI Taxonomy" id="349747"/>
    <lineage>
        <taxon>Bacteria</taxon>
        <taxon>Pseudomonadati</taxon>
        <taxon>Pseudomonadota</taxon>
        <taxon>Gammaproteobacteria</taxon>
        <taxon>Enterobacterales</taxon>
        <taxon>Yersiniaceae</taxon>
        <taxon>Yersinia</taxon>
    </lineage>
</organism>
<gene>
    <name evidence="1" type="primary">queC</name>
    <name type="ordered locus">YpsIP31758_3085</name>
</gene>
<accession>A7FLB7</accession>
<name>QUEC_YERP3</name>
<sequence length="232" mass="25472">MKRAVVVFSGGQDSTTCLIQALQQYDEVHCITFDYGQRHRTEIDVARELALQLGATAHKVLDVGMLNELAVSSLTRDSIPVPSYDANADGALPSTFVPGRNILFLTLASIYAYQVQAQAVITGVCETDFSGYPDCRDEFIKALNHAIDLGIGRDIAFITPLMWLDKAETWALADYYQQLDLIRHHTLTCYNGIKGDGCGQCAACHLRAKGLASYMANKQQVILNLKQKVGLA</sequence>
<reference key="1">
    <citation type="journal article" date="2007" name="PLoS Genet.">
        <title>The complete genome sequence of Yersinia pseudotuberculosis IP31758, the causative agent of Far East scarlet-like fever.</title>
        <authorList>
            <person name="Eppinger M."/>
            <person name="Rosovitz M.J."/>
            <person name="Fricke W.F."/>
            <person name="Rasko D.A."/>
            <person name="Kokorina G."/>
            <person name="Fayolle C."/>
            <person name="Lindler L.E."/>
            <person name="Carniel E."/>
            <person name="Ravel J."/>
        </authorList>
    </citation>
    <scope>NUCLEOTIDE SEQUENCE [LARGE SCALE GENOMIC DNA]</scope>
    <source>
        <strain>IP 31758</strain>
    </source>
</reference>
<proteinExistence type="inferred from homology"/>
<comment type="function">
    <text evidence="1">Catalyzes the ATP-dependent conversion of 7-carboxy-7-deazaguanine (CDG) to 7-cyano-7-deazaguanine (preQ(0)).</text>
</comment>
<comment type="catalytic activity">
    <reaction evidence="1">
        <text>7-carboxy-7-deazaguanine + NH4(+) + ATP = 7-cyano-7-deazaguanine + ADP + phosphate + H2O + H(+)</text>
        <dbReference type="Rhea" id="RHEA:27982"/>
        <dbReference type="ChEBI" id="CHEBI:15377"/>
        <dbReference type="ChEBI" id="CHEBI:15378"/>
        <dbReference type="ChEBI" id="CHEBI:28938"/>
        <dbReference type="ChEBI" id="CHEBI:30616"/>
        <dbReference type="ChEBI" id="CHEBI:43474"/>
        <dbReference type="ChEBI" id="CHEBI:45075"/>
        <dbReference type="ChEBI" id="CHEBI:61036"/>
        <dbReference type="ChEBI" id="CHEBI:456216"/>
        <dbReference type="EC" id="6.3.4.20"/>
    </reaction>
</comment>
<comment type="cofactor">
    <cofactor evidence="1">
        <name>Zn(2+)</name>
        <dbReference type="ChEBI" id="CHEBI:29105"/>
    </cofactor>
    <text evidence="1">Binds 1 zinc ion per subunit.</text>
</comment>
<comment type="pathway">
    <text evidence="1">Purine metabolism; 7-cyano-7-deazaguanine biosynthesis.</text>
</comment>
<comment type="similarity">
    <text evidence="1">Belongs to the QueC family.</text>
</comment>
<evidence type="ECO:0000255" key="1">
    <source>
        <dbReference type="HAMAP-Rule" id="MF_01633"/>
    </source>
</evidence>